<dbReference type="EC" id="4.2.3.5" evidence="1"/>
<dbReference type="EMBL" id="CP001404">
    <property type="protein sequence ID" value="ACP48120.1"/>
    <property type="molecule type" value="Genomic_DNA"/>
</dbReference>
<dbReference type="RefSeq" id="WP_012717306.1">
    <property type="nucleotide sequence ID" value="NC_012623.1"/>
</dbReference>
<dbReference type="SMR" id="C3NG02"/>
<dbReference type="GeneID" id="7809625"/>
<dbReference type="KEGG" id="sin:YN1551_1013"/>
<dbReference type="HOGENOM" id="CLU_034547_0_0_2"/>
<dbReference type="UniPathway" id="UPA00053">
    <property type="reaction ID" value="UER00090"/>
</dbReference>
<dbReference type="Proteomes" id="UP000006818">
    <property type="component" value="Chromosome"/>
</dbReference>
<dbReference type="GO" id="GO:0005829">
    <property type="term" value="C:cytosol"/>
    <property type="evidence" value="ECO:0007669"/>
    <property type="project" value="TreeGrafter"/>
</dbReference>
<dbReference type="GO" id="GO:0004107">
    <property type="term" value="F:chorismate synthase activity"/>
    <property type="evidence" value="ECO:0007669"/>
    <property type="project" value="UniProtKB-UniRule"/>
</dbReference>
<dbReference type="GO" id="GO:0010181">
    <property type="term" value="F:FMN binding"/>
    <property type="evidence" value="ECO:0007669"/>
    <property type="project" value="TreeGrafter"/>
</dbReference>
<dbReference type="GO" id="GO:0008652">
    <property type="term" value="P:amino acid biosynthetic process"/>
    <property type="evidence" value="ECO:0007669"/>
    <property type="project" value="UniProtKB-KW"/>
</dbReference>
<dbReference type="GO" id="GO:0009073">
    <property type="term" value="P:aromatic amino acid family biosynthetic process"/>
    <property type="evidence" value="ECO:0007669"/>
    <property type="project" value="UniProtKB-KW"/>
</dbReference>
<dbReference type="GO" id="GO:0009423">
    <property type="term" value="P:chorismate biosynthetic process"/>
    <property type="evidence" value="ECO:0007669"/>
    <property type="project" value="UniProtKB-UniRule"/>
</dbReference>
<dbReference type="CDD" id="cd07304">
    <property type="entry name" value="Chorismate_synthase"/>
    <property type="match status" value="1"/>
</dbReference>
<dbReference type="FunFam" id="3.60.150.10:FF:000002">
    <property type="entry name" value="Chorismate synthase"/>
    <property type="match status" value="1"/>
</dbReference>
<dbReference type="Gene3D" id="3.60.150.10">
    <property type="entry name" value="Chorismate synthase AroC"/>
    <property type="match status" value="1"/>
</dbReference>
<dbReference type="HAMAP" id="MF_00300">
    <property type="entry name" value="Chorismate_synth"/>
    <property type="match status" value="1"/>
</dbReference>
<dbReference type="InterPro" id="IPR000453">
    <property type="entry name" value="Chorismate_synth"/>
</dbReference>
<dbReference type="InterPro" id="IPR035904">
    <property type="entry name" value="Chorismate_synth_AroC_sf"/>
</dbReference>
<dbReference type="InterPro" id="IPR020541">
    <property type="entry name" value="Chorismate_synthase_CS"/>
</dbReference>
<dbReference type="NCBIfam" id="TIGR00033">
    <property type="entry name" value="aroC"/>
    <property type="match status" value="1"/>
</dbReference>
<dbReference type="NCBIfam" id="NF003793">
    <property type="entry name" value="PRK05382.1"/>
    <property type="match status" value="1"/>
</dbReference>
<dbReference type="PANTHER" id="PTHR21085">
    <property type="entry name" value="CHORISMATE SYNTHASE"/>
    <property type="match status" value="1"/>
</dbReference>
<dbReference type="PANTHER" id="PTHR21085:SF0">
    <property type="entry name" value="CHORISMATE SYNTHASE"/>
    <property type="match status" value="1"/>
</dbReference>
<dbReference type="Pfam" id="PF01264">
    <property type="entry name" value="Chorismate_synt"/>
    <property type="match status" value="1"/>
</dbReference>
<dbReference type="PIRSF" id="PIRSF001456">
    <property type="entry name" value="Chorismate_synth"/>
    <property type="match status" value="1"/>
</dbReference>
<dbReference type="SUPFAM" id="SSF103263">
    <property type="entry name" value="Chorismate synthase, AroC"/>
    <property type="match status" value="1"/>
</dbReference>
<dbReference type="PROSITE" id="PS00787">
    <property type="entry name" value="CHORISMATE_SYNTHASE_1"/>
    <property type="match status" value="1"/>
</dbReference>
<dbReference type="PROSITE" id="PS00788">
    <property type="entry name" value="CHORISMATE_SYNTHASE_2"/>
    <property type="match status" value="1"/>
</dbReference>
<dbReference type="PROSITE" id="PS00789">
    <property type="entry name" value="CHORISMATE_SYNTHASE_3"/>
    <property type="match status" value="1"/>
</dbReference>
<comment type="function">
    <text evidence="1">Catalyzes the anti-1,4-elimination of the C-3 phosphate and the C-6 proR hydrogen from 5-enolpyruvylshikimate-3-phosphate (EPSP) to yield chorismate, which is the branch point compound that serves as the starting substrate for the three terminal pathways of aromatic amino acid biosynthesis. This reaction introduces a second double bond into the aromatic ring system.</text>
</comment>
<comment type="catalytic activity">
    <reaction evidence="1">
        <text>5-O-(1-carboxyvinyl)-3-phosphoshikimate = chorismate + phosphate</text>
        <dbReference type="Rhea" id="RHEA:21020"/>
        <dbReference type="ChEBI" id="CHEBI:29748"/>
        <dbReference type="ChEBI" id="CHEBI:43474"/>
        <dbReference type="ChEBI" id="CHEBI:57701"/>
        <dbReference type="EC" id="4.2.3.5"/>
    </reaction>
</comment>
<comment type="cofactor">
    <cofactor evidence="1">
        <name>FMNH2</name>
        <dbReference type="ChEBI" id="CHEBI:57618"/>
    </cofactor>
    <text evidence="1">Reduced FMN (FMNH(2)).</text>
</comment>
<comment type="pathway">
    <text evidence="1">Metabolic intermediate biosynthesis; chorismate biosynthesis; chorismate from D-erythrose 4-phosphate and phosphoenolpyruvate: step 7/7.</text>
</comment>
<comment type="similarity">
    <text evidence="1">Belongs to the chorismate synthase family.</text>
</comment>
<protein>
    <recommendedName>
        <fullName evidence="1">Chorismate synthase</fullName>
        <shortName evidence="1">CS</shortName>
        <ecNumber evidence="1">4.2.3.5</ecNumber>
    </recommendedName>
    <alternativeName>
        <fullName evidence="1">5-enolpyruvylshikimate-3-phosphate phospholyase</fullName>
    </alternativeName>
</protein>
<feature type="chain" id="PRO_1000204963" description="Chorismate synthase">
    <location>
        <begin position="1"/>
        <end position="391"/>
    </location>
</feature>
<feature type="binding site" evidence="1">
    <location>
        <position position="48"/>
    </location>
    <ligand>
        <name>NADP(+)</name>
        <dbReference type="ChEBI" id="CHEBI:58349"/>
    </ligand>
</feature>
<feature type="binding site" evidence="1">
    <location>
        <begin position="126"/>
        <end position="128"/>
    </location>
    <ligand>
        <name>FMN</name>
        <dbReference type="ChEBI" id="CHEBI:58210"/>
    </ligand>
</feature>
<feature type="binding site" evidence="1">
    <location>
        <position position="286"/>
    </location>
    <ligand>
        <name>FMN</name>
        <dbReference type="ChEBI" id="CHEBI:58210"/>
    </ligand>
</feature>
<feature type="binding site" evidence="1">
    <location>
        <begin position="301"/>
        <end position="305"/>
    </location>
    <ligand>
        <name>FMN</name>
        <dbReference type="ChEBI" id="CHEBI:58210"/>
    </ligand>
</feature>
<feature type="binding site" evidence="1">
    <location>
        <position position="328"/>
    </location>
    <ligand>
        <name>FMN</name>
        <dbReference type="ChEBI" id="CHEBI:58210"/>
    </ligand>
</feature>
<name>AROC_SACI1</name>
<keyword id="KW-0028">Amino-acid biosynthesis</keyword>
<keyword id="KW-0057">Aromatic amino acid biosynthesis</keyword>
<keyword id="KW-0274">FAD</keyword>
<keyword id="KW-0285">Flavoprotein</keyword>
<keyword id="KW-0288">FMN</keyword>
<keyword id="KW-0456">Lyase</keyword>
<keyword id="KW-0521">NADP</keyword>
<organism>
    <name type="scientific">Saccharolobus islandicus (strain Y.N.15.51 / Yellowstone #2)</name>
    <name type="common">Sulfolobus islandicus</name>
    <dbReference type="NCBI Taxonomy" id="419942"/>
    <lineage>
        <taxon>Archaea</taxon>
        <taxon>Thermoproteota</taxon>
        <taxon>Thermoprotei</taxon>
        <taxon>Sulfolobales</taxon>
        <taxon>Sulfolobaceae</taxon>
        <taxon>Saccharolobus</taxon>
    </lineage>
</organism>
<accession>C3NG02</accession>
<sequence>MPGNSFGKLFRVTTFGESHGPAVGVVIDGVPAGLPLTVEDIKFELEFRKPGRLYVSGRREKDEPEILSGIFNNRTTGSPIAVIVRNTDVISSFYEEIRYKPRPGHADLPFIMKYGYENWDYRGGGRASARETVGRVIAGAVAKKLLMLADTWIAGHLRSLGPEELNEEVTFEEVLCSKYSPVRASKKVLEEKYEALIKKATQEGDSYGGIAEVITKNPPIGLGEPVFDKMKAELAKAIMSIPAVTGFEYGLGFMVSKMKGSEANDEIIRKDNKIGWKYNYAGGILGGLTNGEDLIVRCAFKPTSSIRKPQKTIDLRNLEETYISVIGRHDPAVAIRGVTVVESMVALTLVDHAMRAGVIPLVKLTEEQGNIVQQRWERYVRSCKPMEESQL</sequence>
<proteinExistence type="inferred from homology"/>
<gene>
    <name evidence="1" type="primary">aroC</name>
    <name type="ordered locus">YN1551_1013</name>
</gene>
<evidence type="ECO:0000255" key="1">
    <source>
        <dbReference type="HAMAP-Rule" id="MF_00300"/>
    </source>
</evidence>
<reference key="1">
    <citation type="journal article" date="2009" name="Proc. Natl. Acad. Sci. U.S.A.">
        <title>Biogeography of the Sulfolobus islandicus pan-genome.</title>
        <authorList>
            <person name="Reno M.L."/>
            <person name="Held N.L."/>
            <person name="Fields C.J."/>
            <person name="Burke P.V."/>
            <person name="Whitaker R.J."/>
        </authorList>
    </citation>
    <scope>NUCLEOTIDE SEQUENCE [LARGE SCALE GENOMIC DNA]</scope>
    <source>
        <strain>Y.N.15.51 / Yellowstone #2</strain>
    </source>
</reference>